<protein>
    <recommendedName>
        <fullName>Protein LIGHT-DEPENDENT SHORT HYPOCOTYLS 7</fullName>
    </recommendedName>
    <alternativeName>
        <fullName>Protein ORGAN BOUNDARY 7</fullName>
    </alternativeName>
</protein>
<keyword id="KW-0217">Developmental protein</keyword>
<keyword id="KW-0238">DNA-binding</keyword>
<keyword id="KW-0539">Nucleus</keyword>
<keyword id="KW-1185">Reference proteome</keyword>
<keyword id="KW-0804">Transcription</keyword>
<keyword id="KW-0805">Transcription regulation</keyword>
<comment type="function">
    <text evidence="1">Probable transcription regulator that acts as a developmental regulator by promoting cell growth in response to light.</text>
</comment>
<comment type="subcellular location">
    <subcellularLocation>
        <location evidence="1">Nucleus</location>
    </subcellularLocation>
</comment>
<comment type="similarity">
    <text evidence="4">Belongs to the plant homeotic and developmental regulators ALOG protein family.</text>
</comment>
<gene>
    <name type="primary">LSH7</name>
    <name type="synonym">OBO7</name>
    <name type="ordered locus">At1g78815</name>
    <name type="ORF">F9K20.14</name>
</gene>
<dbReference type="EMBL" id="AC005679">
    <property type="protein sequence ID" value="AAC83029.1"/>
    <property type="molecule type" value="Genomic_DNA"/>
</dbReference>
<dbReference type="EMBL" id="CP002684">
    <property type="protein sequence ID" value="AEE36158.1"/>
    <property type="molecule type" value="Genomic_DNA"/>
</dbReference>
<dbReference type="EMBL" id="BT025756">
    <property type="protein sequence ID" value="ABF83646.1"/>
    <property type="molecule type" value="mRNA"/>
</dbReference>
<dbReference type="EMBL" id="AY086257">
    <property type="protein sequence ID" value="AAM64330.1"/>
    <property type="molecule type" value="mRNA"/>
</dbReference>
<dbReference type="PIR" id="D96817">
    <property type="entry name" value="D96817"/>
</dbReference>
<dbReference type="RefSeq" id="NP_565190.1">
    <property type="nucleotide sequence ID" value="NM_106529.2"/>
</dbReference>
<dbReference type="SMR" id="Q9ZVA0"/>
<dbReference type="STRING" id="3702.Q9ZVA0"/>
<dbReference type="PaxDb" id="3702-AT1G78815.1"/>
<dbReference type="ProteomicsDB" id="238681"/>
<dbReference type="EnsemblPlants" id="AT1G78815.1">
    <property type="protein sequence ID" value="AT1G78815.1"/>
    <property type="gene ID" value="AT1G78815"/>
</dbReference>
<dbReference type="GeneID" id="844218"/>
<dbReference type="Gramene" id="AT1G78815.1">
    <property type="protein sequence ID" value="AT1G78815.1"/>
    <property type="gene ID" value="AT1G78815"/>
</dbReference>
<dbReference type="KEGG" id="ath:AT1G78815"/>
<dbReference type="Araport" id="AT1G78815"/>
<dbReference type="TAIR" id="AT1G78815">
    <property type="gene designation" value="LSH7"/>
</dbReference>
<dbReference type="eggNOG" id="ENOG502QQTQ">
    <property type="taxonomic scope" value="Eukaryota"/>
</dbReference>
<dbReference type="HOGENOM" id="CLU_071168_1_1_1"/>
<dbReference type="InParanoid" id="Q9ZVA0"/>
<dbReference type="OMA" id="NQHPPVH"/>
<dbReference type="PhylomeDB" id="Q9ZVA0"/>
<dbReference type="PRO" id="PR:Q9ZVA0"/>
<dbReference type="Proteomes" id="UP000006548">
    <property type="component" value="Chromosome 1"/>
</dbReference>
<dbReference type="ExpressionAtlas" id="Q9ZVA0">
    <property type="expression patterns" value="baseline and differential"/>
</dbReference>
<dbReference type="GO" id="GO:0005634">
    <property type="term" value="C:nucleus"/>
    <property type="evidence" value="ECO:0000250"/>
    <property type="project" value="UniProtKB"/>
</dbReference>
<dbReference type="GO" id="GO:0003677">
    <property type="term" value="F:DNA binding"/>
    <property type="evidence" value="ECO:0007669"/>
    <property type="project" value="UniProtKB-KW"/>
</dbReference>
<dbReference type="GO" id="GO:0009299">
    <property type="term" value="P:mRNA transcription"/>
    <property type="evidence" value="ECO:0000250"/>
    <property type="project" value="UniProtKB"/>
</dbReference>
<dbReference type="GO" id="GO:0090698">
    <property type="term" value="P:post-embryonic plant morphogenesis"/>
    <property type="evidence" value="ECO:0000250"/>
    <property type="project" value="UniProtKB"/>
</dbReference>
<dbReference type="InterPro" id="IPR040222">
    <property type="entry name" value="ALOG"/>
</dbReference>
<dbReference type="InterPro" id="IPR006936">
    <property type="entry name" value="ALOG_dom"/>
</dbReference>
<dbReference type="PANTHER" id="PTHR31165">
    <property type="entry name" value="PROTEIN G1-LIKE2"/>
    <property type="match status" value="1"/>
</dbReference>
<dbReference type="PANTHER" id="PTHR31165:SF9">
    <property type="entry name" value="PROTEIN LIGHT-DEPENDENT SHORT HYPOCOTYLS 7-RELATED"/>
    <property type="match status" value="1"/>
</dbReference>
<dbReference type="Pfam" id="PF04852">
    <property type="entry name" value="ALOG_dom"/>
    <property type="match status" value="1"/>
</dbReference>
<dbReference type="PROSITE" id="PS51697">
    <property type="entry name" value="ALOG"/>
    <property type="match status" value="1"/>
</dbReference>
<feature type="chain" id="PRO_0000425294" description="Protein LIGHT-DEPENDENT SHORT HYPOCOTYLS 7">
    <location>
        <begin position="1"/>
        <end position="195"/>
    </location>
</feature>
<feature type="domain" description="ALOG" evidence="2">
    <location>
        <begin position="40"/>
        <end position="167"/>
    </location>
</feature>
<feature type="region of interest" description="Disordered" evidence="3">
    <location>
        <begin position="1"/>
        <end position="41"/>
    </location>
</feature>
<feature type="region of interest" description="Disordered" evidence="3">
    <location>
        <begin position="154"/>
        <end position="195"/>
    </location>
</feature>
<feature type="short sequence motif" description="Nuclear localization signal" evidence="1">
    <location>
        <begin position="165"/>
        <end position="169"/>
    </location>
</feature>
<feature type="compositionally biased region" description="Pro residues" evidence="3">
    <location>
        <begin position="21"/>
        <end position="36"/>
    </location>
</feature>
<feature type="compositionally biased region" description="Basic residues" evidence="3">
    <location>
        <begin position="162"/>
        <end position="175"/>
    </location>
</feature>
<feature type="compositionally biased region" description="Low complexity" evidence="3">
    <location>
        <begin position="184"/>
        <end position="195"/>
    </location>
</feature>
<feature type="sequence conflict" description="In Ref. 4; AAM64330 and 3; ABF83646." evidence="4" ref="4 3">
    <original>H</original>
    <variation>P</variation>
    <location>
        <position position="4"/>
    </location>
</feature>
<feature type="sequence conflict" description="In Ref. 4; AAM64330." evidence="4" ref="4">
    <original>P</original>
    <variation>L</variation>
    <location>
        <position position="29"/>
    </location>
</feature>
<sequence>MASHSNKGKGIAEGSSQPQSQPQPQPHQPQSPPNPPALSRYESQKRRDWNTFCQYLRNQQPPVHISQCGSNHILDFLQYLDQFGKTKVHIHGCVFFGQVEPAGQCNCPLKQAWGSLDALIGRLRAAFEENGGLPERNPFAGGGIRVFLREVRDSQAKARGVPYKKRKKRKKRNPMKSHDGEDGTTGTSSSSNLAS</sequence>
<organism>
    <name type="scientific">Arabidopsis thaliana</name>
    <name type="common">Mouse-ear cress</name>
    <dbReference type="NCBI Taxonomy" id="3702"/>
    <lineage>
        <taxon>Eukaryota</taxon>
        <taxon>Viridiplantae</taxon>
        <taxon>Streptophyta</taxon>
        <taxon>Embryophyta</taxon>
        <taxon>Tracheophyta</taxon>
        <taxon>Spermatophyta</taxon>
        <taxon>Magnoliopsida</taxon>
        <taxon>eudicotyledons</taxon>
        <taxon>Gunneridae</taxon>
        <taxon>Pentapetalae</taxon>
        <taxon>rosids</taxon>
        <taxon>malvids</taxon>
        <taxon>Brassicales</taxon>
        <taxon>Brassicaceae</taxon>
        <taxon>Camelineae</taxon>
        <taxon>Arabidopsis</taxon>
    </lineage>
</organism>
<accession>Q9ZVA0</accession>
<accession>Q1ECH8</accession>
<accession>Q8LD19</accession>
<evidence type="ECO:0000250" key="1"/>
<evidence type="ECO:0000255" key="2">
    <source>
        <dbReference type="PROSITE-ProRule" id="PRU01033"/>
    </source>
</evidence>
<evidence type="ECO:0000256" key="3">
    <source>
        <dbReference type="SAM" id="MobiDB-lite"/>
    </source>
</evidence>
<evidence type="ECO:0000305" key="4"/>
<reference key="1">
    <citation type="journal article" date="2000" name="Nature">
        <title>Sequence and analysis of chromosome 1 of the plant Arabidopsis thaliana.</title>
        <authorList>
            <person name="Theologis A."/>
            <person name="Ecker J.R."/>
            <person name="Palm C.J."/>
            <person name="Federspiel N.A."/>
            <person name="Kaul S."/>
            <person name="White O."/>
            <person name="Alonso J."/>
            <person name="Altafi H."/>
            <person name="Araujo R."/>
            <person name="Bowman C.L."/>
            <person name="Brooks S.Y."/>
            <person name="Buehler E."/>
            <person name="Chan A."/>
            <person name="Chao Q."/>
            <person name="Chen H."/>
            <person name="Cheuk R.F."/>
            <person name="Chin C.W."/>
            <person name="Chung M.K."/>
            <person name="Conn L."/>
            <person name="Conway A.B."/>
            <person name="Conway A.R."/>
            <person name="Creasy T.H."/>
            <person name="Dewar K."/>
            <person name="Dunn P."/>
            <person name="Etgu P."/>
            <person name="Feldblyum T.V."/>
            <person name="Feng J.-D."/>
            <person name="Fong B."/>
            <person name="Fujii C.Y."/>
            <person name="Gill J.E."/>
            <person name="Goldsmith A.D."/>
            <person name="Haas B."/>
            <person name="Hansen N.F."/>
            <person name="Hughes B."/>
            <person name="Huizar L."/>
            <person name="Hunter J.L."/>
            <person name="Jenkins J."/>
            <person name="Johnson-Hopson C."/>
            <person name="Khan S."/>
            <person name="Khaykin E."/>
            <person name="Kim C.J."/>
            <person name="Koo H.L."/>
            <person name="Kremenetskaia I."/>
            <person name="Kurtz D.B."/>
            <person name="Kwan A."/>
            <person name="Lam B."/>
            <person name="Langin-Hooper S."/>
            <person name="Lee A."/>
            <person name="Lee J.M."/>
            <person name="Lenz C.A."/>
            <person name="Li J.H."/>
            <person name="Li Y.-P."/>
            <person name="Lin X."/>
            <person name="Liu S.X."/>
            <person name="Liu Z.A."/>
            <person name="Luros J.S."/>
            <person name="Maiti R."/>
            <person name="Marziali A."/>
            <person name="Militscher J."/>
            <person name="Miranda M."/>
            <person name="Nguyen M."/>
            <person name="Nierman W.C."/>
            <person name="Osborne B.I."/>
            <person name="Pai G."/>
            <person name="Peterson J."/>
            <person name="Pham P.K."/>
            <person name="Rizzo M."/>
            <person name="Rooney T."/>
            <person name="Rowley D."/>
            <person name="Sakano H."/>
            <person name="Salzberg S.L."/>
            <person name="Schwartz J.R."/>
            <person name="Shinn P."/>
            <person name="Southwick A.M."/>
            <person name="Sun H."/>
            <person name="Tallon L.J."/>
            <person name="Tambunga G."/>
            <person name="Toriumi M.J."/>
            <person name="Town C.D."/>
            <person name="Utterback T."/>
            <person name="Van Aken S."/>
            <person name="Vaysberg M."/>
            <person name="Vysotskaia V.S."/>
            <person name="Walker M."/>
            <person name="Wu D."/>
            <person name="Yu G."/>
            <person name="Fraser C.M."/>
            <person name="Venter J.C."/>
            <person name="Davis R.W."/>
        </authorList>
    </citation>
    <scope>NUCLEOTIDE SEQUENCE [LARGE SCALE GENOMIC DNA]</scope>
    <source>
        <strain>cv. Columbia</strain>
    </source>
</reference>
<reference key="2">
    <citation type="journal article" date="2017" name="Plant J.">
        <title>Araport11: a complete reannotation of the Arabidopsis thaliana reference genome.</title>
        <authorList>
            <person name="Cheng C.Y."/>
            <person name="Krishnakumar V."/>
            <person name="Chan A.P."/>
            <person name="Thibaud-Nissen F."/>
            <person name="Schobel S."/>
            <person name="Town C.D."/>
        </authorList>
    </citation>
    <scope>GENOME REANNOTATION</scope>
    <source>
        <strain>cv. Columbia</strain>
    </source>
</reference>
<reference key="3">
    <citation type="submission" date="2006-06" db="EMBL/GenBank/DDBJ databases">
        <title>Arabidopsis ORF clones.</title>
        <authorList>
            <person name="Kim C.J."/>
            <person name="Chen H."/>
            <person name="Quinitio C."/>
            <person name="Shinn P."/>
            <person name="Ecker J.R."/>
        </authorList>
    </citation>
    <scope>NUCLEOTIDE SEQUENCE [LARGE SCALE MRNA]</scope>
    <source>
        <strain>cv. Columbia</strain>
    </source>
</reference>
<reference key="4">
    <citation type="submission" date="2002-03" db="EMBL/GenBank/DDBJ databases">
        <title>Full-length cDNA from Arabidopsis thaliana.</title>
        <authorList>
            <person name="Brover V.V."/>
            <person name="Troukhan M.E."/>
            <person name="Alexandrov N.A."/>
            <person name="Lu Y.-P."/>
            <person name="Flavell R.B."/>
            <person name="Feldmann K.A."/>
        </authorList>
    </citation>
    <scope>NUCLEOTIDE SEQUENCE [LARGE SCALE MRNA]</scope>
</reference>
<reference key="5">
    <citation type="journal article" date="2004" name="Plant J.">
        <title>Overexpression of LSH1, a member of an uncharacterised gene family, causes enhanced light regulation of seedling development.</title>
        <authorList>
            <person name="Zhao L."/>
            <person name="Nakazawa M."/>
            <person name="Takase T."/>
            <person name="Manabe K."/>
            <person name="Kobayashi M."/>
            <person name="Seki M."/>
            <person name="Shinozaki K."/>
            <person name="Matsui M."/>
        </authorList>
    </citation>
    <scope>GENE FAMILY</scope>
    <scope>NOMENCLATURE</scope>
    <source>
        <strain>cv. Columbia</strain>
    </source>
</reference>
<reference key="6">
    <citation type="journal article" date="2011" name="Proc. Natl. Acad. Sci. U.S.A.">
        <title>Organ boundary1 defines a gene expressed at the junction between the shoot apical meristem and lateral organs.</title>
        <authorList>
            <person name="Cho E."/>
            <person name="Zambryski P.C."/>
        </authorList>
    </citation>
    <scope>GENE FAMILY</scope>
</reference>
<reference key="7">
    <citation type="journal article" date="2012" name="Biol. Direct">
        <title>ALOG domains: provenance of plant homeotic and developmental regulators from the DNA-binding domain of a novel class of DIRS1-type retroposons.</title>
        <authorList>
            <person name="Iyer L.M."/>
            <person name="Aravind L."/>
        </authorList>
    </citation>
    <scope>DNA-BINDING</scope>
    <scope>GENE FAMILY</scope>
</reference>
<proteinExistence type="evidence at protein level"/>
<name>LSH7_ARATH</name>